<comment type="similarity">
    <text evidence="1">Belongs to the bacterial ribosomal protein bS21 family.</text>
</comment>
<sequence length="71" mass="8345">MPIIKVRENEPFDVALRRFKRSCEKAGILADVRAREFYEKPTTARKRAKAAAVKRLAKKLSRENARRVRLY</sequence>
<gene>
    <name evidence="1" type="primary">rpsU</name>
    <name type="ordered locus">Shewmr7_2987</name>
</gene>
<protein>
    <recommendedName>
        <fullName evidence="1">Small ribosomal subunit protein bS21</fullName>
    </recommendedName>
    <alternativeName>
        <fullName evidence="2">30S ribosomal protein S21</fullName>
    </alternativeName>
</protein>
<dbReference type="EMBL" id="CP000444">
    <property type="protein sequence ID" value="ABI43971.1"/>
    <property type="molecule type" value="Genomic_DNA"/>
</dbReference>
<dbReference type="SMR" id="Q0HSD4"/>
<dbReference type="KEGG" id="shm:Shewmr7_2987"/>
<dbReference type="HOGENOM" id="CLU_159258_1_0_6"/>
<dbReference type="GO" id="GO:1990904">
    <property type="term" value="C:ribonucleoprotein complex"/>
    <property type="evidence" value="ECO:0007669"/>
    <property type="project" value="UniProtKB-KW"/>
</dbReference>
<dbReference type="GO" id="GO:0005840">
    <property type="term" value="C:ribosome"/>
    <property type="evidence" value="ECO:0007669"/>
    <property type="project" value="UniProtKB-KW"/>
</dbReference>
<dbReference type="GO" id="GO:0003735">
    <property type="term" value="F:structural constituent of ribosome"/>
    <property type="evidence" value="ECO:0007669"/>
    <property type="project" value="InterPro"/>
</dbReference>
<dbReference type="GO" id="GO:0006412">
    <property type="term" value="P:translation"/>
    <property type="evidence" value="ECO:0007669"/>
    <property type="project" value="UniProtKB-UniRule"/>
</dbReference>
<dbReference type="Gene3D" id="1.20.5.1150">
    <property type="entry name" value="Ribosomal protein S8"/>
    <property type="match status" value="1"/>
</dbReference>
<dbReference type="HAMAP" id="MF_00358">
    <property type="entry name" value="Ribosomal_bS21"/>
    <property type="match status" value="1"/>
</dbReference>
<dbReference type="InterPro" id="IPR001911">
    <property type="entry name" value="Ribosomal_bS21"/>
</dbReference>
<dbReference type="InterPro" id="IPR018278">
    <property type="entry name" value="Ribosomal_bS21_CS"/>
</dbReference>
<dbReference type="InterPro" id="IPR038380">
    <property type="entry name" value="Ribosomal_bS21_sf"/>
</dbReference>
<dbReference type="NCBIfam" id="TIGR00030">
    <property type="entry name" value="S21p"/>
    <property type="match status" value="1"/>
</dbReference>
<dbReference type="PANTHER" id="PTHR21109">
    <property type="entry name" value="MITOCHONDRIAL 28S RIBOSOMAL PROTEIN S21"/>
    <property type="match status" value="1"/>
</dbReference>
<dbReference type="PANTHER" id="PTHR21109:SF22">
    <property type="entry name" value="SMALL RIBOSOMAL SUBUNIT PROTEIN BS21"/>
    <property type="match status" value="1"/>
</dbReference>
<dbReference type="Pfam" id="PF01165">
    <property type="entry name" value="Ribosomal_S21"/>
    <property type="match status" value="1"/>
</dbReference>
<dbReference type="PRINTS" id="PR00976">
    <property type="entry name" value="RIBOSOMALS21"/>
</dbReference>
<dbReference type="PROSITE" id="PS01181">
    <property type="entry name" value="RIBOSOMAL_S21"/>
    <property type="match status" value="1"/>
</dbReference>
<reference key="1">
    <citation type="submission" date="2006-08" db="EMBL/GenBank/DDBJ databases">
        <title>Complete sequence of chromosome 1 of Shewanella sp. MR-7.</title>
        <authorList>
            <person name="Copeland A."/>
            <person name="Lucas S."/>
            <person name="Lapidus A."/>
            <person name="Barry K."/>
            <person name="Detter J.C."/>
            <person name="Glavina del Rio T."/>
            <person name="Hammon N."/>
            <person name="Israni S."/>
            <person name="Dalin E."/>
            <person name="Tice H."/>
            <person name="Pitluck S."/>
            <person name="Kiss H."/>
            <person name="Brettin T."/>
            <person name="Bruce D."/>
            <person name="Han C."/>
            <person name="Tapia R."/>
            <person name="Gilna P."/>
            <person name="Schmutz J."/>
            <person name="Larimer F."/>
            <person name="Land M."/>
            <person name="Hauser L."/>
            <person name="Kyrpides N."/>
            <person name="Mikhailova N."/>
            <person name="Nealson K."/>
            <person name="Konstantinidis K."/>
            <person name="Klappenbach J."/>
            <person name="Tiedje J."/>
            <person name="Richardson P."/>
        </authorList>
    </citation>
    <scope>NUCLEOTIDE SEQUENCE [LARGE SCALE GENOMIC DNA]</scope>
    <source>
        <strain>MR-7</strain>
    </source>
</reference>
<evidence type="ECO:0000255" key="1">
    <source>
        <dbReference type="HAMAP-Rule" id="MF_00358"/>
    </source>
</evidence>
<evidence type="ECO:0000305" key="2"/>
<organism>
    <name type="scientific">Shewanella sp. (strain MR-7)</name>
    <dbReference type="NCBI Taxonomy" id="60481"/>
    <lineage>
        <taxon>Bacteria</taxon>
        <taxon>Pseudomonadati</taxon>
        <taxon>Pseudomonadota</taxon>
        <taxon>Gammaproteobacteria</taxon>
        <taxon>Alteromonadales</taxon>
        <taxon>Shewanellaceae</taxon>
        <taxon>Shewanella</taxon>
    </lineage>
</organism>
<feature type="chain" id="PRO_0000266763" description="Small ribosomal subunit protein bS21">
    <location>
        <begin position="1"/>
        <end position="71"/>
    </location>
</feature>
<proteinExistence type="inferred from homology"/>
<name>RS21_SHESR</name>
<accession>Q0HSD4</accession>
<keyword id="KW-0687">Ribonucleoprotein</keyword>
<keyword id="KW-0689">Ribosomal protein</keyword>